<keyword id="KW-0010">Activator</keyword>
<keyword id="KW-1005">Bacterial flagellum biogenesis</keyword>
<keyword id="KW-0963">Cytoplasm</keyword>
<keyword id="KW-1015">Disulfide bond</keyword>
<keyword id="KW-0238">DNA-binding</keyword>
<keyword id="KW-0804">Transcription</keyword>
<keyword id="KW-0805">Transcription regulation</keyword>
<comment type="function">
    <text evidence="1">Functions in complex with FlhC as a master transcriptional regulator that regulates transcription of several flagellar and non-flagellar operons by binding to their promoter region. Activates expression of class 2 flagellar genes, including fliA, which is a flagellum-specific sigma factor that turns on the class 3 genes. Also regulates genes whose products function in a variety of physiological pathways.</text>
</comment>
<comment type="subunit">
    <text evidence="1">Homodimer; disulfide-linked. Forms a heterohexamer composed of two FlhC and four FlhD subunits. Each FlhC binds a FlhD dimer, forming a heterotrimer, and a hexamer assembles by dimerization of two heterotrimers.</text>
</comment>
<comment type="subcellular location">
    <subcellularLocation>
        <location evidence="1">Cytoplasm</location>
    </subcellularLocation>
</comment>
<comment type="domain">
    <text evidence="1">The C-terminal region contains a putative helix-turn-helix (HTH) motif, suggesting that this region may bind DNA.</text>
</comment>
<comment type="similarity">
    <text evidence="1">Belongs to the FlhD family.</text>
</comment>
<reference key="1">
    <citation type="journal article" date="2008" name="J. Bacteriol.">
        <title>The complete genome sequence of Escherichia coli DH10B: insights into the biology of a laboratory workhorse.</title>
        <authorList>
            <person name="Durfee T."/>
            <person name="Nelson R."/>
            <person name="Baldwin S."/>
            <person name="Plunkett G. III"/>
            <person name="Burland V."/>
            <person name="Mau B."/>
            <person name="Petrosino J.F."/>
            <person name="Qin X."/>
            <person name="Muzny D.M."/>
            <person name="Ayele M."/>
            <person name="Gibbs R.A."/>
            <person name="Csorgo B."/>
            <person name="Posfai G."/>
            <person name="Weinstock G.M."/>
            <person name="Blattner F.R."/>
        </authorList>
    </citation>
    <scope>NUCLEOTIDE SEQUENCE [LARGE SCALE GENOMIC DNA]</scope>
    <source>
        <strain>K12 / DH10B</strain>
    </source>
</reference>
<accession>B1XHF8</accession>
<gene>
    <name evidence="1" type="primary">flhD</name>
    <name type="ordered locus">ECDH10B_2033</name>
</gene>
<dbReference type="EMBL" id="CP000948">
    <property type="protein sequence ID" value="ACB03088.1"/>
    <property type="molecule type" value="Genomic_DNA"/>
</dbReference>
<dbReference type="SMR" id="B1XHF8"/>
<dbReference type="KEGG" id="ecd:ECDH10B_2033"/>
<dbReference type="HOGENOM" id="CLU_144160_0_0_6"/>
<dbReference type="GO" id="GO:0005737">
    <property type="term" value="C:cytoplasm"/>
    <property type="evidence" value="ECO:0007669"/>
    <property type="project" value="UniProtKB-SubCell"/>
</dbReference>
<dbReference type="GO" id="GO:0003677">
    <property type="term" value="F:DNA binding"/>
    <property type="evidence" value="ECO:0007669"/>
    <property type="project" value="UniProtKB-UniRule"/>
</dbReference>
<dbReference type="GO" id="GO:0044780">
    <property type="term" value="P:bacterial-type flagellum assembly"/>
    <property type="evidence" value="ECO:0007669"/>
    <property type="project" value="InterPro"/>
</dbReference>
<dbReference type="GO" id="GO:0045893">
    <property type="term" value="P:positive regulation of DNA-templated transcription"/>
    <property type="evidence" value="ECO:0007669"/>
    <property type="project" value="InterPro"/>
</dbReference>
<dbReference type="GO" id="GO:1902208">
    <property type="term" value="P:regulation of bacterial-type flagellum assembly"/>
    <property type="evidence" value="ECO:0007669"/>
    <property type="project" value="UniProtKB-UniRule"/>
</dbReference>
<dbReference type="FunFam" id="1.10.4000.10:FF:000001">
    <property type="entry name" value="Flagellar transcriptional regulator FlhD"/>
    <property type="match status" value="1"/>
</dbReference>
<dbReference type="Gene3D" id="1.10.4000.10">
    <property type="entry name" value="Flagellar transcriptional activator FlhD"/>
    <property type="match status" value="1"/>
</dbReference>
<dbReference type="HAMAP" id="MF_00725">
    <property type="entry name" value="FlhD"/>
    <property type="match status" value="1"/>
</dbReference>
<dbReference type="InterPro" id="IPR023559">
    <property type="entry name" value="Flagellar_FlhD"/>
</dbReference>
<dbReference type="InterPro" id="IPR036194">
    <property type="entry name" value="FlhD_sf"/>
</dbReference>
<dbReference type="NCBIfam" id="NF002783">
    <property type="entry name" value="PRK02909.1-1"/>
    <property type="match status" value="1"/>
</dbReference>
<dbReference type="Pfam" id="PF05247">
    <property type="entry name" value="FlhD"/>
    <property type="match status" value="1"/>
</dbReference>
<dbReference type="SUPFAM" id="SSF63592">
    <property type="entry name" value="Flagellar transcriptional activator FlhD"/>
    <property type="match status" value="1"/>
</dbReference>
<proteinExistence type="inferred from homology"/>
<name>FLHD_ECODH</name>
<organism>
    <name type="scientific">Escherichia coli (strain K12 / DH10B)</name>
    <dbReference type="NCBI Taxonomy" id="316385"/>
    <lineage>
        <taxon>Bacteria</taxon>
        <taxon>Pseudomonadati</taxon>
        <taxon>Pseudomonadota</taxon>
        <taxon>Gammaproteobacteria</taxon>
        <taxon>Enterobacterales</taxon>
        <taxon>Enterobacteriaceae</taxon>
        <taxon>Escherichia</taxon>
    </lineage>
</organism>
<feature type="chain" id="PRO_1000132683" description="Flagellar transcriptional regulator FlhD">
    <location>
        <begin position="1"/>
        <end position="119"/>
    </location>
</feature>
<feature type="disulfide bond" description="Interchain" evidence="1">
    <location>
        <position position="68"/>
    </location>
</feature>
<evidence type="ECO:0000255" key="1">
    <source>
        <dbReference type="HAMAP-Rule" id="MF_00725"/>
    </source>
</evidence>
<sequence>MGIMHTSELLKHIYDINLSYLLLAQRLIVQDKASAMFRLGINEEMATTLAALTLPQMVKLAETNQLVCHFRFDSHQTITQLTQDSRVDDLQQIHTGIMLSTRLLNDVNQPEEALRKKRA</sequence>
<protein>
    <recommendedName>
        <fullName evidence="1">Flagellar transcriptional regulator FlhD</fullName>
    </recommendedName>
</protein>